<reference key="1">
    <citation type="journal article" date="2005" name="Proc. Natl. Acad. Sci. U.S.A.">
        <title>Complete genome sequence of Vibrio fischeri: a symbiotic bacterium with pathogenic congeners.</title>
        <authorList>
            <person name="Ruby E.G."/>
            <person name="Urbanowski M."/>
            <person name="Campbell J."/>
            <person name="Dunn A."/>
            <person name="Faini M."/>
            <person name="Gunsalus R."/>
            <person name="Lostroh P."/>
            <person name="Lupp C."/>
            <person name="McCann J."/>
            <person name="Millikan D."/>
            <person name="Schaefer A."/>
            <person name="Stabb E."/>
            <person name="Stevens A."/>
            <person name="Visick K."/>
            <person name="Whistler C."/>
            <person name="Greenberg E.P."/>
        </authorList>
    </citation>
    <scope>NUCLEOTIDE SEQUENCE [LARGE SCALE GENOMIC DNA]</scope>
    <source>
        <strain>ATCC 700601 / ES114</strain>
    </source>
</reference>
<feature type="chain" id="PRO_0000264455" description="UDP-3-O-acylglucosamine N-acyltransferase">
    <location>
        <begin position="1"/>
        <end position="339"/>
    </location>
</feature>
<feature type="active site" description="Proton acceptor" evidence="1">
    <location>
        <position position="239"/>
    </location>
</feature>
<comment type="function">
    <text evidence="1">Catalyzes the N-acylation of UDP-3-O-acylglucosamine using 3-hydroxyacyl-ACP as the acyl donor. Is involved in the biosynthesis of lipid A, a phosphorylated glycolipid that anchors the lipopolysaccharide to the outer membrane of the cell.</text>
</comment>
<comment type="catalytic activity">
    <reaction evidence="1">
        <text>a UDP-3-O-[(3R)-3-hydroxyacyl]-alpha-D-glucosamine + a (3R)-hydroxyacyl-[ACP] = a UDP-2-N,3-O-bis[(3R)-3-hydroxyacyl]-alpha-D-glucosamine + holo-[ACP] + H(+)</text>
        <dbReference type="Rhea" id="RHEA:53836"/>
        <dbReference type="Rhea" id="RHEA-COMP:9685"/>
        <dbReference type="Rhea" id="RHEA-COMP:9945"/>
        <dbReference type="ChEBI" id="CHEBI:15378"/>
        <dbReference type="ChEBI" id="CHEBI:64479"/>
        <dbReference type="ChEBI" id="CHEBI:78827"/>
        <dbReference type="ChEBI" id="CHEBI:137740"/>
        <dbReference type="ChEBI" id="CHEBI:137748"/>
        <dbReference type="EC" id="2.3.1.191"/>
    </reaction>
</comment>
<comment type="pathway">
    <text evidence="1">Bacterial outer membrane biogenesis; LPS lipid A biosynthesis.</text>
</comment>
<comment type="subunit">
    <text evidence="1">Homotrimer.</text>
</comment>
<comment type="similarity">
    <text evidence="1">Belongs to the transferase hexapeptide repeat family. LpxD subfamily.</text>
</comment>
<dbReference type="EC" id="2.3.1.191" evidence="1"/>
<dbReference type="EMBL" id="CP000020">
    <property type="protein sequence ID" value="AAW86447.1"/>
    <property type="molecule type" value="Genomic_DNA"/>
</dbReference>
<dbReference type="RefSeq" id="WP_011262426.1">
    <property type="nucleotide sequence ID" value="NC_006840.2"/>
</dbReference>
<dbReference type="RefSeq" id="YP_205335.1">
    <property type="nucleotide sequence ID" value="NC_006840.2"/>
</dbReference>
<dbReference type="SMR" id="Q5E3E9"/>
<dbReference type="STRING" id="312309.VF_1952"/>
<dbReference type="EnsemblBacteria" id="AAW86447">
    <property type="protein sequence ID" value="AAW86447"/>
    <property type="gene ID" value="VF_1952"/>
</dbReference>
<dbReference type="GeneID" id="54164648"/>
<dbReference type="KEGG" id="vfi:VF_1952"/>
<dbReference type="PATRIC" id="fig|312309.11.peg.1979"/>
<dbReference type="eggNOG" id="COG1044">
    <property type="taxonomic scope" value="Bacteria"/>
</dbReference>
<dbReference type="HOGENOM" id="CLU_049865_0_1_6"/>
<dbReference type="OrthoDB" id="9784739at2"/>
<dbReference type="UniPathway" id="UPA00973"/>
<dbReference type="Proteomes" id="UP000000537">
    <property type="component" value="Chromosome I"/>
</dbReference>
<dbReference type="GO" id="GO:0016020">
    <property type="term" value="C:membrane"/>
    <property type="evidence" value="ECO:0007669"/>
    <property type="project" value="GOC"/>
</dbReference>
<dbReference type="GO" id="GO:0016410">
    <property type="term" value="F:N-acyltransferase activity"/>
    <property type="evidence" value="ECO:0007669"/>
    <property type="project" value="InterPro"/>
</dbReference>
<dbReference type="GO" id="GO:0009245">
    <property type="term" value="P:lipid A biosynthetic process"/>
    <property type="evidence" value="ECO:0007669"/>
    <property type="project" value="UniProtKB-UniRule"/>
</dbReference>
<dbReference type="CDD" id="cd03352">
    <property type="entry name" value="LbH_LpxD"/>
    <property type="match status" value="1"/>
</dbReference>
<dbReference type="FunFam" id="2.160.10.10:FF:000005">
    <property type="entry name" value="UDP-3-O-(3-hydroxymyristoyl)glucosamine N-acyltransferase"/>
    <property type="match status" value="1"/>
</dbReference>
<dbReference type="Gene3D" id="1.20.5.170">
    <property type="match status" value="1"/>
</dbReference>
<dbReference type="Gene3D" id="2.160.10.10">
    <property type="entry name" value="Hexapeptide repeat proteins"/>
    <property type="match status" value="1"/>
</dbReference>
<dbReference type="Gene3D" id="3.40.1390.10">
    <property type="entry name" value="MurE/MurF, N-terminal domain"/>
    <property type="match status" value="1"/>
</dbReference>
<dbReference type="HAMAP" id="MF_00523">
    <property type="entry name" value="LpxD"/>
    <property type="match status" value="1"/>
</dbReference>
<dbReference type="InterPro" id="IPR001451">
    <property type="entry name" value="Hexapep"/>
</dbReference>
<dbReference type="InterPro" id="IPR007691">
    <property type="entry name" value="LpxD"/>
</dbReference>
<dbReference type="InterPro" id="IPR011004">
    <property type="entry name" value="Trimer_LpxA-like_sf"/>
</dbReference>
<dbReference type="InterPro" id="IPR020573">
    <property type="entry name" value="UDP_GlcNAc_AcTrfase_non-rep"/>
</dbReference>
<dbReference type="NCBIfam" id="TIGR01853">
    <property type="entry name" value="lipid_A_lpxD"/>
    <property type="match status" value="1"/>
</dbReference>
<dbReference type="NCBIfam" id="NF002060">
    <property type="entry name" value="PRK00892.1"/>
    <property type="match status" value="1"/>
</dbReference>
<dbReference type="PANTHER" id="PTHR43378">
    <property type="entry name" value="UDP-3-O-ACYLGLUCOSAMINE N-ACYLTRANSFERASE"/>
    <property type="match status" value="1"/>
</dbReference>
<dbReference type="PANTHER" id="PTHR43378:SF2">
    <property type="entry name" value="UDP-3-O-ACYLGLUCOSAMINE N-ACYLTRANSFERASE 1, MITOCHONDRIAL-RELATED"/>
    <property type="match status" value="1"/>
</dbReference>
<dbReference type="Pfam" id="PF00132">
    <property type="entry name" value="Hexapep"/>
    <property type="match status" value="2"/>
</dbReference>
<dbReference type="Pfam" id="PF14602">
    <property type="entry name" value="Hexapep_2"/>
    <property type="match status" value="2"/>
</dbReference>
<dbReference type="Pfam" id="PF04613">
    <property type="entry name" value="LpxD"/>
    <property type="match status" value="1"/>
</dbReference>
<dbReference type="SUPFAM" id="SSF51161">
    <property type="entry name" value="Trimeric LpxA-like enzymes"/>
    <property type="match status" value="1"/>
</dbReference>
<dbReference type="PROSITE" id="PS00101">
    <property type="entry name" value="HEXAPEP_TRANSFERASES"/>
    <property type="match status" value="1"/>
</dbReference>
<gene>
    <name evidence="1" type="primary">lpxD</name>
    <name type="ordered locus">VF_1952</name>
</gene>
<name>LPXD_ALIF1</name>
<organism>
    <name type="scientific">Aliivibrio fischeri (strain ATCC 700601 / ES114)</name>
    <name type="common">Vibrio fischeri</name>
    <dbReference type="NCBI Taxonomy" id="312309"/>
    <lineage>
        <taxon>Bacteria</taxon>
        <taxon>Pseudomonadati</taxon>
        <taxon>Pseudomonadota</taxon>
        <taxon>Gammaproteobacteria</taxon>
        <taxon>Vibrionales</taxon>
        <taxon>Vibrionaceae</taxon>
        <taxon>Aliivibrio</taxon>
    </lineage>
</organism>
<sequence>MSRITLAELAEKLDATVHGDGTVVVHSIASMSKAKEGDITFLSDAKYRKHLVECQASAVIVKEADVEFCQSNVLIMRDPYLGFALAAQALDTTPAPASDIAPSAYIADDAIIGEGVAIGHNAVIESKAVIADGAMIGAGCFIGKEAKIGKNTKLWANVSVYHRVEIGEACLVQSGTVIGSDGFGYANDRGTWVKIPQLGSVIIGDNVEIGANTTIDRGAIDDTVIESNVIIDNQIQIAHNVQIGSGSAMAGGTIVAGSTKIGKHCIIGGGSVINGHIEITDGVTITGMGMVMRAIDEKGMYSSGIPLQTNKEWRKTAARVHKIDEMNKRLKAVEKKLVD</sequence>
<evidence type="ECO:0000255" key="1">
    <source>
        <dbReference type="HAMAP-Rule" id="MF_00523"/>
    </source>
</evidence>
<accession>Q5E3E9</accession>
<protein>
    <recommendedName>
        <fullName evidence="1">UDP-3-O-acylglucosamine N-acyltransferase</fullName>
        <ecNumber evidence="1">2.3.1.191</ecNumber>
    </recommendedName>
</protein>
<keyword id="KW-0012">Acyltransferase</keyword>
<keyword id="KW-0441">Lipid A biosynthesis</keyword>
<keyword id="KW-0444">Lipid biosynthesis</keyword>
<keyword id="KW-0443">Lipid metabolism</keyword>
<keyword id="KW-1185">Reference proteome</keyword>
<keyword id="KW-0677">Repeat</keyword>
<keyword id="KW-0808">Transferase</keyword>
<proteinExistence type="inferred from homology"/>